<protein>
    <recommendedName>
        <fullName>Fin bud initiation factor homolog</fullName>
    </recommendedName>
</protein>
<evidence type="ECO:0000250" key="1"/>
<evidence type="ECO:0000255" key="2"/>
<evidence type="ECO:0000305" key="3"/>
<gene>
    <name type="primary">FIBIN</name>
</gene>
<comment type="subunit">
    <text evidence="1">Homodimer; disulfide-linked. Seems to also exist as monomers (By similarity).</text>
</comment>
<comment type="subcellular location">
    <subcellularLocation>
        <location evidence="1">Secreted</location>
    </subcellularLocation>
    <subcellularLocation>
        <location evidence="1">Golgi apparatus</location>
    </subcellularLocation>
    <subcellularLocation>
        <location evidence="1">Endoplasmic reticulum</location>
    </subcellularLocation>
</comment>
<comment type="similarity">
    <text evidence="3">Belongs to the FIBIN family.</text>
</comment>
<proteinExistence type="evidence at transcript level"/>
<accession>Q5E9H1</accession>
<keyword id="KW-1015">Disulfide bond</keyword>
<keyword id="KW-0256">Endoplasmic reticulum</keyword>
<keyword id="KW-0325">Glycoprotein</keyword>
<keyword id="KW-0333">Golgi apparatus</keyword>
<keyword id="KW-1185">Reference proteome</keyword>
<keyword id="KW-0964">Secreted</keyword>
<keyword id="KW-0732">Signal</keyword>
<name>FIBIN_BOVIN</name>
<dbReference type="EMBL" id="BT020808">
    <property type="protein sequence ID" value="AAX08825.1"/>
    <property type="molecule type" value="mRNA"/>
</dbReference>
<dbReference type="EMBL" id="BT020949">
    <property type="protein sequence ID" value="AAX08966.1"/>
    <property type="molecule type" value="mRNA"/>
</dbReference>
<dbReference type="EMBL" id="BC122696">
    <property type="protein sequence ID" value="AAI22697.1"/>
    <property type="molecule type" value="mRNA"/>
</dbReference>
<dbReference type="RefSeq" id="NP_001015541.1">
    <property type="nucleotide sequence ID" value="NM_001015541.1"/>
</dbReference>
<dbReference type="SMR" id="Q5E9H1"/>
<dbReference type="FunCoup" id="Q5E9H1">
    <property type="interactions" value="77"/>
</dbReference>
<dbReference type="STRING" id="9913.ENSBTAP00000008771"/>
<dbReference type="GlyCosmos" id="Q5E9H1">
    <property type="glycosylation" value="1 site, No reported glycans"/>
</dbReference>
<dbReference type="GlyGen" id="Q5E9H1">
    <property type="glycosylation" value="1 site"/>
</dbReference>
<dbReference type="PaxDb" id="9913-ENSBTAP00000008771"/>
<dbReference type="Ensembl" id="ENSBTAT00000105530.1">
    <property type="protein sequence ID" value="ENSBTAP00000078495.1"/>
    <property type="gene ID" value="ENSBTAG00000056510.1"/>
</dbReference>
<dbReference type="GeneID" id="507975"/>
<dbReference type="KEGG" id="bta:507975"/>
<dbReference type="CTD" id="387758"/>
<dbReference type="VEuPathDB" id="HostDB:ENSBTAG00000006676"/>
<dbReference type="eggNOG" id="ENOG502QSW0">
    <property type="taxonomic scope" value="Eukaryota"/>
</dbReference>
<dbReference type="GeneTree" id="ENSGT00390000007623"/>
<dbReference type="HOGENOM" id="CLU_1323584_0_0_1"/>
<dbReference type="InParanoid" id="Q5E9H1"/>
<dbReference type="OMA" id="CHGYFDG"/>
<dbReference type="OrthoDB" id="9434858at2759"/>
<dbReference type="TreeFam" id="TF331989"/>
<dbReference type="Proteomes" id="UP000009136">
    <property type="component" value="Chromosome 15"/>
</dbReference>
<dbReference type="Bgee" id="ENSBTAG00000006676">
    <property type="expression patterns" value="Expressed in trachea and 98 other cell types or tissues"/>
</dbReference>
<dbReference type="GO" id="GO:0005783">
    <property type="term" value="C:endoplasmic reticulum"/>
    <property type="evidence" value="ECO:0007669"/>
    <property type="project" value="UniProtKB-SubCell"/>
</dbReference>
<dbReference type="GO" id="GO:0005576">
    <property type="term" value="C:extracellular region"/>
    <property type="evidence" value="ECO:0007669"/>
    <property type="project" value="UniProtKB-SubCell"/>
</dbReference>
<dbReference type="GO" id="GO:0005794">
    <property type="term" value="C:Golgi apparatus"/>
    <property type="evidence" value="ECO:0007669"/>
    <property type="project" value="UniProtKB-SubCell"/>
</dbReference>
<dbReference type="GO" id="GO:0042803">
    <property type="term" value="F:protein homodimerization activity"/>
    <property type="evidence" value="ECO:0007669"/>
    <property type="project" value="Ensembl"/>
</dbReference>
<dbReference type="InterPro" id="IPR026772">
    <property type="entry name" value="Fibin"/>
</dbReference>
<dbReference type="PANTHER" id="PTHR31185">
    <property type="entry name" value="FIN BUD INITIATION FACTOR FIBIN"/>
    <property type="match status" value="1"/>
</dbReference>
<dbReference type="PANTHER" id="PTHR31185:SF0">
    <property type="entry name" value="FIN BUD INITIATION FACTOR HOMOLOG"/>
    <property type="match status" value="1"/>
</dbReference>
<dbReference type="Pfam" id="PF15819">
    <property type="entry name" value="Fibin"/>
    <property type="match status" value="1"/>
</dbReference>
<organism>
    <name type="scientific">Bos taurus</name>
    <name type="common">Bovine</name>
    <dbReference type="NCBI Taxonomy" id="9913"/>
    <lineage>
        <taxon>Eukaryota</taxon>
        <taxon>Metazoa</taxon>
        <taxon>Chordata</taxon>
        <taxon>Craniata</taxon>
        <taxon>Vertebrata</taxon>
        <taxon>Euteleostomi</taxon>
        <taxon>Mammalia</taxon>
        <taxon>Eutheria</taxon>
        <taxon>Laurasiatheria</taxon>
        <taxon>Artiodactyla</taxon>
        <taxon>Ruminantia</taxon>
        <taxon>Pecora</taxon>
        <taxon>Bovidae</taxon>
        <taxon>Bovinae</taxon>
        <taxon>Bos</taxon>
    </lineage>
</organism>
<reference key="1">
    <citation type="journal article" date="2005" name="BMC Genomics">
        <title>Characterization of 954 bovine full-CDS cDNA sequences.</title>
        <authorList>
            <person name="Harhay G.P."/>
            <person name="Sonstegard T.S."/>
            <person name="Keele J.W."/>
            <person name="Heaton M.P."/>
            <person name="Clawson M.L."/>
            <person name="Snelling W.M."/>
            <person name="Wiedmann R.T."/>
            <person name="Van Tassell C.P."/>
            <person name="Smith T.P.L."/>
        </authorList>
    </citation>
    <scope>NUCLEOTIDE SEQUENCE [LARGE SCALE MRNA]</scope>
</reference>
<reference key="2">
    <citation type="submission" date="2006-08" db="EMBL/GenBank/DDBJ databases">
        <authorList>
            <consortium name="NIH - Mammalian Gene Collection (MGC) project"/>
        </authorList>
    </citation>
    <scope>NUCLEOTIDE SEQUENCE [LARGE SCALE MRNA]</scope>
    <source>
        <strain>Hereford</strain>
        <tissue>Hippocampus</tissue>
    </source>
</reference>
<sequence length="211" mass="24233">MVFLKFLWMGFLCHLCQGYFDGPLYPEMSNGTLHHYFVPDGDYEENDDPEKCQLLFRVSDHRRCSQGEGSSASTLLSLTLREEFTVLGRQVEDAGRVLEGISKSISYDLDGEESYGKYLRRESHQIGDAYSNSDKSLTELESKFKQGQEQDSRQESRLNEDFLGMLVHTRSLLKETLDISVGLRDKYELLALTIRSHGTRLGRLKNDYLKV</sequence>
<feature type="signal peptide" evidence="1">
    <location>
        <begin position="1"/>
        <end position="18"/>
    </location>
</feature>
<feature type="chain" id="PRO_0000349209" description="Fin bud initiation factor homolog">
    <location>
        <begin position="19"/>
        <end position="211"/>
    </location>
</feature>
<feature type="glycosylation site" description="N-linked (GlcNAc...) asparagine" evidence="2">
    <location>
        <position position="30"/>
    </location>
</feature>
<feature type="disulfide bond" description="Interchain" evidence="1">
    <location>
        <position position="52"/>
    </location>
</feature>
<feature type="disulfide bond" description="Interchain" evidence="1">
    <location>
        <position position="64"/>
    </location>
</feature>